<protein>
    <recommendedName>
        <fullName evidence="1">Putative 3-methyladenine DNA glycosylase</fullName>
        <ecNumber evidence="1">3.2.2.-</ecNumber>
    </recommendedName>
</protein>
<keyword id="KW-0227">DNA damage</keyword>
<keyword id="KW-0234">DNA repair</keyword>
<keyword id="KW-0378">Hydrolase</keyword>
<organism>
    <name type="scientific">Francisella tularensis subsp. holarctica (strain FTNF002-00 / FTA)</name>
    <dbReference type="NCBI Taxonomy" id="458234"/>
    <lineage>
        <taxon>Bacteria</taxon>
        <taxon>Pseudomonadati</taxon>
        <taxon>Pseudomonadota</taxon>
        <taxon>Gammaproteobacteria</taxon>
        <taxon>Thiotrichales</taxon>
        <taxon>Francisellaceae</taxon>
        <taxon>Francisella</taxon>
    </lineage>
</organism>
<accession>A7NBW2</accession>
<gene>
    <name type="ordered locus">FTA_0989</name>
</gene>
<comment type="similarity">
    <text evidence="1">Belongs to the DNA glycosylase MPG family.</text>
</comment>
<evidence type="ECO:0000255" key="1">
    <source>
        <dbReference type="HAMAP-Rule" id="MF_00527"/>
    </source>
</evidence>
<reference key="1">
    <citation type="journal article" date="2009" name="PLoS ONE">
        <title>Complete genome sequence of Francisella tularensis subspecies holarctica FTNF002-00.</title>
        <authorList>
            <person name="Barabote R.D."/>
            <person name="Xie G."/>
            <person name="Brettin T.S."/>
            <person name="Hinrichs S.H."/>
            <person name="Fey P.D."/>
            <person name="Jay J.J."/>
            <person name="Engle J.L."/>
            <person name="Godbole S.D."/>
            <person name="Noronha J.M."/>
            <person name="Scheuermann R.H."/>
            <person name="Zhou L.W."/>
            <person name="Lion C."/>
            <person name="Dempsey M.P."/>
        </authorList>
    </citation>
    <scope>NUCLEOTIDE SEQUENCE [LARGE SCALE GENOMIC DNA]</scope>
    <source>
        <strain>FTNF002-00 / FTA</strain>
    </source>
</reference>
<dbReference type="EC" id="3.2.2.-" evidence="1"/>
<dbReference type="EMBL" id="CP000803">
    <property type="protein sequence ID" value="ABU61465.1"/>
    <property type="molecule type" value="Genomic_DNA"/>
</dbReference>
<dbReference type="RefSeq" id="WP_003018833.1">
    <property type="nucleotide sequence ID" value="NC_009749.1"/>
</dbReference>
<dbReference type="SMR" id="A7NBW2"/>
<dbReference type="KEGG" id="fta:FTA_0989"/>
<dbReference type="HOGENOM" id="CLU_060471_0_2_6"/>
<dbReference type="GO" id="GO:0003905">
    <property type="term" value="F:alkylbase DNA N-glycosylase activity"/>
    <property type="evidence" value="ECO:0007669"/>
    <property type="project" value="InterPro"/>
</dbReference>
<dbReference type="GO" id="GO:0003677">
    <property type="term" value="F:DNA binding"/>
    <property type="evidence" value="ECO:0007669"/>
    <property type="project" value="InterPro"/>
</dbReference>
<dbReference type="GO" id="GO:0006284">
    <property type="term" value="P:base-excision repair"/>
    <property type="evidence" value="ECO:0007669"/>
    <property type="project" value="InterPro"/>
</dbReference>
<dbReference type="CDD" id="cd00540">
    <property type="entry name" value="AAG"/>
    <property type="match status" value="1"/>
</dbReference>
<dbReference type="FunFam" id="3.10.300.10:FF:000001">
    <property type="entry name" value="Putative 3-methyladenine DNA glycosylase"/>
    <property type="match status" value="1"/>
</dbReference>
<dbReference type="Gene3D" id="3.10.300.10">
    <property type="entry name" value="Methylpurine-DNA glycosylase (MPG)"/>
    <property type="match status" value="1"/>
</dbReference>
<dbReference type="HAMAP" id="MF_00527">
    <property type="entry name" value="3MGH"/>
    <property type="match status" value="1"/>
</dbReference>
<dbReference type="InterPro" id="IPR011034">
    <property type="entry name" value="Formyl_transferase-like_C_sf"/>
</dbReference>
<dbReference type="InterPro" id="IPR003180">
    <property type="entry name" value="MPG"/>
</dbReference>
<dbReference type="InterPro" id="IPR036995">
    <property type="entry name" value="MPG_sf"/>
</dbReference>
<dbReference type="NCBIfam" id="TIGR00567">
    <property type="entry name" value="3mg"/>
    <property type="match status" value="1"/>
</dbReference>
<dbReference type="NCBIfam" id="NF002003">
    <property type="entry name" value="PRK00802.1-3"/>
    <property type="match status" value="1"/>
</dbReference>
<dbReference type="PANTHER" id="PTHR10429">
    <property type="entry name" value="DNA-3-METHYLADENINE GLYCOSYLASE"/>
    <property type="match status" value="1"/>
</dbReference>
<dbReference type="PANTHER" id="PTHR10429:SF0">
    <property type="entry name" value="DNA-3-METHYLADENINE GLYCOSYLASE"/>
    <property type="match status" value="1"/>
</dbReference>
<dbReference type="Pfam" id="PF02245">
    <property type="entry name" value="Pur_DNA_glyco"/>
    <property type="match status" value="1"/>
</dbReference>
<dbReference type="SUPFAM" id="SSF50486">
    <property type="entry name" value="FMT C-terminal domain-like"/>
    <property type="match status" value="1"/>
</dbReference>
<sequence>MNNLEAILRLKTIDAAKKLLGHFLVSKYNNKILIGKIVETEAYLYNDPACHSYSNRTKRNSMMYAQAGTSYVYFTYGMHYCFNVVTADVGIGEAILIRALEPIAGIEQMQLNRSKTKLIDLCSGPAKLTQALNINLKDNGINLLDKDSSILLRYNNDLINEIDIVQTQRIGISKAKDMPYRFYIKDNIFVSKK</sequence>
<proteinExistence type="inferred from homology"/>
<feature type="chain" id="PRO_1000050988" description="Putative 3-methyladenine DNA glycosylase">
    <location>
        <begin position="1"/>
        <end position="193"/>
    </location>
</feature>
<name>3MGH_FRATF</name>